<accession>Q9ZE32</accession>
<reference key="1">
    <citation type="journal article" date="1998" name="Nature">
        <title>The genome sequence of Rickettsia prowazekii and the origin of mitochondria.</title>
        <authorList>
            <person name="Andersson S.G.E."/>
            <person name="Zomorodipour A."/>
            <person name="Andersson J.O."/>
            <person name="Sicheritz-Ponten T."/>
            <person name="Alsmark U.C.M."/>
            <person name="Podowski R.M."/>
            <person name="Naeslund A.K."/>
            <person name="Eriksson A.-S."/>
            <person name="Winkler H.H."/>
            <person name="Kurland C.G."/>
        </authorList>
    </citation>
    <scope>NUCLEOTIDE SEQUENCE [LARGE SCALE GENOMIC DNA]</scope>
    <source>
        <strain>Madrid E</strain>
    </source>
</reference>
<keyword id="KW-1003">Cell membrane</keyword>
<keyword id="KW-0378">Hydrolase</keyword>
<keyword id="KW-0472">Membrane</keyword>
<keyword id="KW-0645">Protease</keyword>
<keyword id="KW-1185">Reference proteome</keyword>
<keyword id="KW-0812">Transmembrane</keyword>
<keyword id="KW-1133">Transmembrane helix</keyword>
<protein>
    <recommendedName>
        <fullName>Signal peptidase I</fullName>
        <shortName>SPase I</shortName>
        <ecNumber>3.4.21.89</ecNumber>
    </recommendedName>
    <alternativeName>
        <fullName>Leader peptidase I</fullName>
    </alternativeName>
</protein>
<dbReference type="EC" id="3.4.21.89"/>
<dbReference type="EMBL" id="AJ235270">
    <property type="protein sequence ID" value="CAA14585.1"/>
    <property type="molecule type" value="Genomic_DNA"/>
</dbReference>
<dbReference type="PIR" id="B71721">
    <property type="entry name" value="B71721"/>
</dbReference>
<dbReference type="RefSeq" id="NP_220508.1">
    <property type="nucleotide sequence ID" value="NC_000963.1"/>
</dbReference>
<dbReference type="RefSeq" id="WP_004597149.1">
    <property type="nucleotide sequence ID" value="NC_000963.1"/>
</dbReference>
<dbReference type="SMR" id="Q9ZE32"/>
<dbReference type="STRING" id="272947.gene:17555199"/>
<dbReference type="MEROPS" id="S26.001"/>
<dbReference type="EnsemblBacteria" id="CAA14585">
    <property type="protein sequence ID" value="CAA14585"/>
    <property type="gene ID" value="CAA14585"/>
</dbReference>
<dbReference type="GeneID" id="57569244"/>
<dbReference type="KEGG" id="rpr:RP116"/>
<dbReference type="PATRIC" id="fig|272947.5.peg.118"/>
<dbReference type="eggNOG" id="COG0681">
    <property type="taxonomic scope" value="Bacteria"/>
</dbReference>
<dbReference type="HOGENOM" id="CLU_028723_1_2_5"/>
<dbReference type="OrthoDB" id="9815782at2"/>
<dbReference type="Proteomes" id="UP000002480">
    <property type="component" value="Chromosome"/>
</dbReference>
<dbReference type="GO" id="GO:0005886">
    <property type="term" value="C:plasma membrane"/>
    <property type="evidence" value="ECO:0007669"/>
    <property type="project" value="UniProtKB-SubCell"/>
</dbReference>
<dbReference type="GO" id="GO:0004252">
    <property type="term" value="F:serine-type endopeptidase activity"/>
    <property type="evidence" value="ECO:0007669"/>
    <property type="project" value="UniProtKB-EC"/>
</dbReference>
<dbReference type="GO" id="GO:0006465">
    <property type="term" value="P:signal peptide processing"/>
    <property type="evidence" value="ECO:0007669"/>
    <property type="project" value="InterPro"/>
</dbReference>
<dbReference type="CDD" id="cd06530">
    <property type="entry name" value="S26_SPase_I"/>
    <property type="match status" value="1"/>
</dbReference>
<dbReference type="Gene3D" id="2.10.109.10">
    <property type="entry name" value="Umud Fragment, subunit A"/>
    <property type="match status" value="1"/>
</dbReference>
<dbReference type="InterPro" id="IPR036286">
    <property type="entry name" value="LexA/Signal_pep-like_sf"/>
</dbReference>
<dbReference type="InterPro" id="IPR000223">
    <property type="entry name" value="Pept_S26A_signal_pept_1"/>
</dbReference>
<dbReference type="InterPro" id="IPR019758">
    <property type="entry name" value="Pept_S26A_signal_pept_1_CS"/>
</dbReference>
<dbReference type="InterPro" id="IPR019757">
    <property type="entry name" value="Pept_S26A_signal_pept_1_Lys-AS"/>
</dbReference>
<dbReference type="InterPro" id="IPR019533">
    <property type="entry name" value="Peptidase_S26"/>
</dbReference>
<dbReference type="NCBIfam" id="TIGR02227">
    <property type="entry name" value="sigpep_I_bact"/>
    <property type="match status" value="1"/>
</dbReference>
<dbReference type="PANTHER" id="PTHR43390:SF1">
    <property type="entry name" value="CHLOROPLAST PROCESSING PEPTIDASE"/>
    <property type="match status" value="1"/>
</dbReference>
<dbReference type="PANTHER" id="PTHR43390">
    <property type="entry name" value="SIGNAL PEPTIDASE I"/>
    <property type="match status" value="1"/>
</dbReference>
<dbReference type="Pfam" id="PF10502">
    <property type="entry name" value="Peptidase_S26"/>
    <property type="match status" value="1"/>
</dbReference>
<dbReference type="PRINTS" id="PR00727">
    <property type="entry name" value="LEADERPTASE"/>
</dbReference>
<dbReference type="SUPFAM" id="SSF51306">
    <property type="entry name" value="LexA/Signal peptidase"/>
    <property type="match status" value="1"/>
</dbReference>
<dbReference type="PROSITE" id="PS00760">
    <property type="entry name" value="SPASE_I_2"/>
    <property type="match status" value="1"/>
</dbReference>
<dbReference type="PROSITE" id="PS00761">
    <property type="entry name" value="SPASE_I_3"/>
    <property type="match status" value="1"/>
</dbReference>
<gene>
    <name type="primary">lepB</name>
    <name type="ordered locus">RP116</name>
</gene>
<evidence type="ECO:0000250" key="1"/>
<evidence type="ECO:0000255" key="2"/>
<evidence type="ECO:0000305" key="3"/>
<name>LEP_RICPR</name>
<proteinExistence type="inferred from homology"/>
<organism>
    <name type="scientific">Rickettsia prowazekii (strain Madrid E)</name>
    <dbReference type="NCBI Taxonomy" id="272947"/>
    <lineage>
        <taxon>Bacteria</taxon>
        <taxon>Pseudomonadati</taxon>
        <taxon>Pseudomonadota</taxon>
        <taxon>Alphaproteobacteria</taxon>
        <taxon>Rickettsiales</taxon>
        <taxon>Rickettsiaceae</taxon>
        <taxon>Rickettsieae</taxon>
        <taxon>Rickettsia</taxon>
        <taxon>typhus group</taxon>
    </lineage>
</organism>
<sequence>MNRDNINSNKTVKQEFGSFAFVICIALVIRILIMEPFTVPTGSMKATILENDYIFSTKYSYGYSNYSLSFFDFIHLFKGRVFAREPERGDIVVFRPPNDMSVRYIKRLIGLPGDKIQLIDDVIYINDKKIERTEVGTYIGEDGIKYLKFKETLPNGRTYFSYKLAPIFGVIPSDRYSNTDVFYVPEGQYFFLGDNRDRSNDSRVNLGFVPFENFIAKAQFIWFSTKITWWDNDIGIINLILKLKPWIESVRLSRIFKNLYNVDE</sequence>
<comment type="catalytic activity">
    <reaction>
        <text>Cleavage of hydrophobic, N-terminal signal or leader sequences from secreted and periplasmic proteins.</text>
        <dbReference type="EC" id="3.4.21.89"/>
    </reaction>
</comment>
<comment type="subcellular location">
    <subcellularLocation>
        <location evidence="3">Cell membrane</location>
        <topology evidence="3">Single-pass type II membrane protein</topology>
    </subcellularLocation>
</comment>
<comment type="similarity">
    <text evidence="3">Belongs to the peptidase S26 family.</text>
</comment>
<feature type="chain" id="PRO_0000109516" description="Signal peptidase I">
    <location>
        <begin position="1"/>
        <end position="264"/>
    </location>
</feature>
<feature type="topological domain" description="Cytoplasmic" evidence="2">
    <location>
        <begin position="1"/>
        <end position="18"/>
    </location>
</feature>
<feature type="transmembrane region" description="Helical" evidence="2">
    <location>
        <begin position="19"/>
        <end position="39"/>
    </location>
</feature>
<feature type="topological domain" description="Extracellular" evidence="2">
    <location>
        <begin position="40"/>
        <end position="264"/>
    </location>
</feature>
<feature type="active site" evidence="1">
    <location>
        <position position="43"/>
    </location>
</feature>
<feature type="active site" evidence="1">
    <location>
        <position position="106"/>
    </location>
</feature>